<feature type="chain" id="PRO_1000135453" description="Sulfate transporter CysZ">
    <location>
        <begin position="1"/>
        <end position="253"/>
    </location>
</feature>
<feature type="transmembrane region" description="Helical" evidence="1">
    <location>
        <begin position="31"/>
        <end position="51"/>
    </location>
</feature>
<feature type="transmembrane region" description="Helical" evidence="1">
    <location>
        <begin position="75"/>
        <end position="95"/>
    </location>
</feature>
<feature type="transmembrane region" description="Helical" evidence="1">
    <location>
        <begin position="151"/>
        <end position="171"/>
    </location>
</feature>
<feature type="transmembrane region" description="Helical" evidence="1">
    <location>
        <begin position="222"/>
        <end position="242"/>
    </location>
</feature>
<comment type="function">
    <text evidence="1">High affinity, high specificity proton-dependent sulfate transporter, which mediates sulfate uptake. Provides the sulfur source for the cysteine synthesis pathway.</text>
</comment>
<comment type="subcellular location">
    <subcellularLocation>
        <location evidence="1">Cell inner membrane</location>
        <topology evidence="1">Multi-pass membrane protein</topology>
    </subcellularLocation>
</comment>
<comment type="similarity">
    <text evidence="1">Belongs to the CysZ family.</text>
</comment>
<name>CYSZ_ECO55</name>
<evidence type="ECO:0000255" key="1">
    <source>
        <dbReference type="HAMAP-Rule" id="MF_00468"/>
    </source>
</evidence>
<reference key="1">
    <citation type="journal article" date="2009" name="PLoS Genet.">
        <title>Organised genome dynamics in the Escherichia coli species results in highly diverse adaptive paths.</title>
        <authorList>
            <person name="Touchon M."/>
            <person name="Hoede C."/>
            <person name="Tenaillon O."/>
            <person name="Barbe V."/>
            <person name="Baeriswyl S."/>
            <person name="Bidet P."/>
            <person name="Bingen E."/>
            <person name="Bonacorsi S."/>
            <person name="Bouchier C."/>
            <person name="Bouvet O."/>
            <person name="Calteau A."/>
            <person name="Chiapello H."/>
            <person name="Clermont O."/>
            <person name="Cruveiller S."/>
            <person name="Danchin A."/>
            <person name="Diard M."/>
            <person name="Dossat C."/>
            <person name="Karoui M.E."/>
            <person name="Frapy E."/>
            <person name="Garry L."/>
            <person name="Ghigo J.M."/>
            <person name="Gilles A.M."/>
            <person name="Johnson J."/>
            <person name="Le Bouguenec C."/>
            <person name="Lescat M."/>
            <person name="Mangenot S."/>
            <person name="Martinez-Jehanne V."/>
            <person name="Matic I."/>
            <person name="Nassif X."/>
            <person name="Oztas S."/>
            <person name="Petit M.A."/>
            <person name="Pichon C."/>
            <person name="Rouy Z."/>
            <person name="Ruf C.S."/>
            <person name="Schneider D."/>
            <person name="Tourret J."/>
            <person name="Vacherie B."/>
            <person name="Vallenet D."/>
            <person name="Medigue C."/>
            <person name="Rocha E.P.C."/>
            <person name="Denamur E."/>
        </authorList>
    </citation>
    <scope>NUCLEOTIDE SEQUENCE [LARGE SCALE GENOMIC DNA]</scope>
    <source>
        <strain>55989 / EAEC</strain>
    </source>
</reference>
<sequence length="253" mass="29271">MVSSFTSAPRSGFYYFAQGWKLVSQPGIRRFVILPLLVNILLMGGAFWWLFTQLDVWIPTLMSYVPDWLQWLSYLLWPLAVISVLLVFGYFFSTIANWIAAPFNGLLAEQLEARLTGATPPDTGIFGIMKDVPRIMKREWQKFAWYLPRAIVLLILYLIPGIGQTVAPVLWFLFSAWMLAIQYCDYPFDNHKVPFKEMRTALRTRKITNMQFGALTSLFTMIPLLNLFIMPVAVCGATAMWVDCYRDKHAMWR</sequence>
<gene>
    <name evidence="1" type="primary">cysZ</name>
    <name type="ordered locus">EC55989_2703</name>
</gene>
<keyword id="KW-0028">Amino-acid biosynthesis</keyword>
<keyword id="KW-0997">Cell inner membrane</keyword>
<keyword id="KW-1003">Cell membrane</keyword>
<keyword id="KW-0198">Cysteine biosynthesis</keyword>
<keyword id="KW-0472">Membrane</keyword>
<keyword id="KW-1185">Reference proteome</keyword>
<keyword id="KW-0764">Sulfate transport</keyword>
<keyword id="KW-0812">Transmembrane</keyword>
<keyword id="KW-1133">Transmembrane helix</keyword>
<keyword id="KW-0813">Transport</keyword>
<dbReference type="EMBL" id="CU928145">
    <property type="protein sequence ID" value="CAU98569.1"/>
    <property type="molecule type" value="Genomic_DNA"/>
</dbReference>
<dbReference type="RefSeq" id="WP_000254843.1">
    <property type="nucleotide sequence ID" value="NC_011748.1"/>
</dbReference>
<dbReference type="SMR" id="B7LCF8"/>
<dbReference type="KEGG" id="eck:EC55989_2703"/>
<dbReference type="HOGENOM" id="CLU_070331_1_0_6"/>
<dbReference type="Proteomes" id="UP000000746">
    <property type="component" value="Chromosome"/>
</dbReference>
<dbReference type="GO" id="GO:0005886">
    <property type="term" value="C:plasma membrane"/>
    <property type="evidence" value="ECO:0007669"/>
    <property type="project" value="UniProtKB-SubCell"/>
</dbReference>
<dbReference type="GO" id="GO:0009675">
    <property type="term" value="F:high-affinity sulfate:proton symporter activity"/>
    <property type="evidence" value="ECO:0007669"/>
    <property type="project" value="TreeGrafter"/>
</dbReference>
<dbReference type="GO" id="GO:0019344">
    <property type="term" value="P:cysteine biosynthetic process"/>
    <property type="evidence" value="ECO:0007669"/>
    <property type="project" value="UniProtKB-UniRule"/>
</dbReference>
<dbReference type="GO" id="GO:0000103">
    <property type="term" value="P:sulfate assimilation"/>
    <property type="evidence" value="ECO:0007669"/>
    <property type="project" value="InterPro"/>
</dbReference>
<dbReference type="HAMAP" id="MF_00468">
    <property type="entry name" value="CysZ"/>
    <property type="match status" value="1"/>
</dbReference>
<dbReference type="InterPro" id="IPR050480">
    <property type="entry name" value="CysZ_sulfate_transptr"/>
</dbReference>
<dbReference type="InterPro" id="IPR022985">
    <property type="entry name" value="Sulfate_CysZ"/>
</dbReference>
<dbReference type="NCBIfam" id="NF003433">
    <property type="entry name" value="PRK04949.1"/>
    <property type="match status" value="1"/>
</dbReference>
<dbReference type="PANTHER" id="PTHR37468">
    <property type="entry name" value="SULFATE TRANSPORTER CYSZ"/>
    <property type="match status" value="1"/>
</dbReference>
<dbReference type="PANTHER" id="PTHR37468:SF1">
    <property type="entry name" value="SULFATE TRANSPORTER CYSZ"/>
    <property type="match status" value="1"/>
</dbReference>
<dbReference type="Pfam" id="PF07264">
    <property type="entry name" value="EI24"/>
    <property type="match status" value="1"/>
</dbReference>
<accession>B7LCF8</accession>
<proteinExistence type="inferred from homology"/>
<organism>
    <name type="scientific">Escherichia coli (strain 55989 / EAEC)</name>
    <dbReference type="NCBI Taxonomy" id="585055"/>
    <lineage>
        <taxon>Bacteria</taxon>
        <taxon>Pseudomonadati</taxon>
        <taxon>Pseudomonadota</taxon>
        <taxon>Gammaproteobacteria</taxon>
        <taxon>Enterobacterales</taxon>
        <taxon>Enterobacteriaceae</taxon>
        <taxon>Escherichia</taxon>
    </lineage>
</organism>
<protein>
    <recommendedName>
        <fullName evidence="1">Sulfate transporter CysZ</fullName>
    </recommendedName>
</protein>